<accession>Q0AUJ9</accession>
<dbReference type="EMBL" id="CP000448">
    <property type="protein sequence ID" value="ABI69605.1"/>
    <property type="molecule type" value="Genomic_DNA"/>
</dbReference>
<dbReference type="RefSeq" id="WP_011641689.1">
    <property type="nucleotide sequence ID" value="NC_008346.1"/>
</dbReference>
<dbReference type="SMR" id="Q0AUJ9"/>
<dbReference type="STRING" id="335541.Swol_2314"/>
<dbReference type="KEGG" id="swo:Swol_2314"/>
<dbReference type="eggNOG" id="COG0200">
    <property type="taxonomic scope" value="Bacteria"/>
</dbReference>
<dbReference type="HOGENOM" id="CLU_055188_4_2_9"/>
<dbReference type="OrthoDB" id="9810293at2"/>
<dbReference type="Proteomes" id="UP000001968">
    <property type="component" value="Chromosome"/>
</dbReference>
<dbReference type="GO" id="GO:0022625">
    <property type="term" value="C:cytosolic large ribosomal subunit"/>
    <property type="evidence" value="ECO:0007669"/>
    <property type="project" value="TreeGrafter"/>
</dbReference>
<dbReference type="GO" id="GO:0019843">
    <property type="term" value="F:rRNA binding"/>
    <property type="evidence" value="ECO:0007669"/>
    <property type="project" value="UniProtKB-UniRule"/>
</dbReference>
<dbReference type="GO" id="GO:0003735">
    <property type="term" value="F:structural constituent of ribosome"/>
    <property type="evidence" value="ECO:0007669"/>
    <property type="project" value="InterPro"/>
</dbReference>
<dbReference type="GO" id="GO:0006412">
    <property type="term" value="P:translation"/>
    <property type="evidence" value="ECO:0007669"/>
    <property type="project" value="UniProtKB-UniRule"/>
</dbReference>
<dbReference type="Gene3D" id="3.100.10.10">
    <property type="match status" value="1"/>
</dbReference>
<dbReference type="HAMAP" id="MF_01341">
    <property type="entry name" value="Ribosomal_uL15"/>
    <property type="match status" value="1"/>
</dbReference>
<dbReference type="InterPro" id="IPR030878">
    <property type="entry name" value="Ribosomal_uL15"/>
</dbReference>
<dbReference type="InterPro" id="IPR021131">
    <property type="entry name" value="Ribosomal_uL15/eL18"/>
</dbReference>
<dbReference type="InterPro" id="IPR036227">
    <property type="entry name" value="Ribosomal_uL15/eL18_sf"/>
</dbReference>
<dbReference type="InterPro" id="IPR005749">
    <property type="entry name" value="Ribosomal_uL15_bac-type"/>
</dbReference>
<dbReference type="InterPro" id="IPR001196">
    <property type="entry name" value="Ribosomal_uL15_CS"/>
</dbReference>
<dbReference type="NCBIfam" id="TIGR01071">
    <property type="entry name" value="rplO_bact"/>
    <property type="match status" value="1"/>
</dbReference>
<dbReference type="PANTHER" id="PTHR12934">
    <property type="entry name" value="50S RIBOSOMAL PROTEIN L15"/>
    <property type="match status" value="1"/>
</dbReference>
<dbReference type="PANTHER" id="PTHR12934:SF11">
    <property type="entry name" value="LARGE RIBOSOMAL SUBUNIT PROTEIN UL15M"/>
    <property type="match status" value="1"/>
</dbReference>
<dbReference type="Pfam" id="PF00828">
    <property type="entry name" value="Ribosomal_L27A"/>
    <property type="match status" value="1"/>
</dbReference>
<dbReference type="SUPFAM" id="SSF52080">
    <property type="entry name" value="Ribosomal proteins L15p and L18e"/>
    <property type="match status" value="1"/>
</dbReference>
<dbReference type="PROSITE" id="PS00475">
    <property type="entry name" value="RIBOSOMAL_L15"/>
    <property type="match status" value="1"/>
</dbReference>
<gene>
    <name evidence="1" type="primary">rplO</name>
    <name type="ordered locus">Swol_2314</name>
</gene>
<feature type="chain" id="PRO_1000054556" description="Large ribosomal subunit protein uL15">
    <location>
        <begin position="1"/>
        <end position="146"/>
    </location>
</feature>
<feature type="region of interest" description="Disordered" evidence="2">
    <location>
        <begin position="1"/>
        <end position="59"/>
    </location>
</feature>
<feature type="compositionally biased region" description="Basic residues" evidence="2">
    <location>
        <begin position="30"/>
        <end position="39"/>
    </location>
</feature>
<feature type="compositionally biased region" description="Gly residues" evidence="2">
    <location>
        <begin position="42"/>
        <end position="52"/>
    </location>
</feature>
<evidence type="ECO:0000255" key="1">
    <source>
        <dbReference type="HAMAP-Rule" id="MF_01341"/>
    </source>
</evidence>
<evidence type="ECO:0000256" key="2">
    <source>
        <dbReference type="SAM" id="MobiDB-lite"/>
    </source>
</evidence>
<evidence type="ECO:0000305" key="3"/>
<keyword id="KW-1185">Reference proteome</keyword>
<keyword id="KW-0687">Ribonucleoprotein</keyword>
<keyword id="KW-0689">Ribosomal protein</keyword>
<keyword id="KW-0694">RNA-binding</keyword>
<keyword id="KW-0699">rRNA-binding</keyword>
<reference key="1">
    <citation type="journal article" date="2010" name="Environ. Microbiol.">
        <title>The genome of Syntrophomonas wolfei: new insights into syntrophic metabolism and biohydrogen production.</title>
        <authorList>
            <person name="Sieber J.R."/>
            <person name="Sims D.R."/>
            <person name="Han C."/>
            <person name="Kim E."/>
            <person name="Lykidis A."/>
            <person name="Lapidus A.L."/>
            <person name="McDonnald E."/>
            <person name="Rohlin L."/>
            <person name="Culley D.E."/>
            <person name="Gunsalus R."/>
            <person name="McInerney M.J."/>
        </authorList>
    </citation>
    <scope>NUCLEOTIDE SEQUENCE [LARGE SCALE GENOMIC DNA]</scope>
    <source>
        <strain>DSM 2245B / Goettingen</strain>
    </source>
</reference>
<protein>
    <recommendedName>
        <fullName evidence="1">Large ribosomal subunit protein uL15</fullName>
    </recommendedName>
    <alternativeName>
        <fullName evidence="3">50S ribosomal protein L15</fullName>
    </alternativeName>
</protein>
<comment type="function">
    <text evidence="1">Binds to the 23S rRNA.</text>
</comment>
<comment type="subunit">
    <text evidence="1">Part of the 50S ribosomal subunit.</text>
</comment>
<comment type="similarity">
    <text evidence="1">Belongs to the universal ribosomal protein uL15 family.</text>
</comment>
<organism>
    <name type="scientific">Syntrophomonas wolfei subsp. wolfei (strain DSM 2245B / Goettingen)</name>
    <dbReference type="NCBI Taxonomy" id="335541"/>
    <lineage>
        <taxon>Bacteria</taxon>
        <taxon>Bacillati</taxon>
        <taxon>Bacillota</taxon>
        <taxon>Clostridia</taxon>
        <taxon>Eubacteriales</taxon>
        <taxon>Syntrophomonadaceae</taxon>
        <taxon>Syntrophomonas</taxon>
    </lineage>
</organism>
<sequence length="146" mass="15779">MRLEELKAPAGANKRTKRVGRGTGSGHGKTSTRGHKGQKSRSGGGVRPGFEGGQMPLQRRLPKRGFNNIFKKVYAIVNVEDLNIFPDGSEVNPDTLQETGLVKAIKDGVKILGNGVLEKRLQVKAHKISKQAEEKITAKGGKVEVI</sequence>
<proteinExistence type="inferred from homology"/>
<name>RL15_SYNWW</name>